<protein>
    <recommendedName>
        <fullName>Deleted in azoospermia protein 1</fullName>
    </recommendedName>
</protein>
<gene>
    <name type="primary">DAZ1</name>
    <name type="synonym">DAZ</name>
    <name type="synonym">SPGY</name>
</gene>
<accession>Q9NQZ3</accession>
<accession>Q1RMF9</accession>
<accession>Q9NQZ4</accession>
<keyword id="KW-0025">Alternative splicing</keyword>
<keyword id="KW-0963">Cytoplasm</keyword>
<keyword id="KW-0217">Developmental protein</keyword>
<keyword id="KW-0221">Differentiation</keyword>
<keyword id="KW-0539">Nucleus</keyword>
<keyword id="KW-1185">Reference proteome</keyword>
<keyword id="KW-0677">Repeat</keyword>
<keyword id="KW-0694">RNA-binding</keyword>
<keyword id="KW-0744">Spermatogenesis</keyword>
<dbReference type="EMBL" id="AC010088">
    <property type="status" value="NOT_ANNOTATED_CDS"/>
    <property type="molecule type" value="Genomic_DNA"/>
</dbReference>
<dbReference type="EMBL" id="AC053490">
    <property type="status" value="NOT_ANNOTATED_CDS"/>
    <property type="molecule type" value="Genomic_DNA"/>
</dbReference>
<dbReference type="EMBL" id="AC006338">
    <property type="status" value="NOT_ANNOTATED_CDS"/>
    <property type="molecule type" value="Genomic_DNA"/>
</dbReference>
<dbReference type="EMBL" id="BC114927">
    <property type="protein sequence ID" value="AAI14928.1"/>
    <property type="molecule type" value="mRNA"/>
</dbReference>
<dbReference type="EMBL" id="AF271087">
    <property type="protein sequence ID" value="AAF91405.1"/>
    <property type="molecule type" value="Transcribed_RNA"/>
</dbReference>
<dbReference type="EMBL" id="AF271088">
    <property type="protein sequence ID" value="AAF91406.1"/>
    <property type="molecule type" value="mRNA"/>
</dbReference>
<dbReference type="CCDS" id="CCDS48209.1">
    <molecule id="Q9NQZ3-1"/>
</dbReference>
<dbReference type="RefSeq" id="NP_004072.3">
    <molecule id="Q9NQZ3-1"/>
    <property type="nucleotide sequence ID" value="NM_004081.7"/>
</dbReference>
<dbReference type="BioGRID" id="107986">
    <property type="interactions" value="10"/>
</dbReference>
<dbReference type="FunCoup" id="Q9NQZ3">
    <property type="interactions" value="3"/>
</dbReference>
<dbReference type="IntAct" id="Q9NQZ3">
    <property type="interactions" value="10"/>
</dbReference>
<dbReference type="STRING" id="9606.ENSP00000384573"/>
<dbReference type="iPTMnet" id="Q9NQZ3"/>
<dbReference type="PhosphoSitePlus" id="Q9NQZ3"/>
<dbReference type="BioMuta" id="DAZ1"/>
<dbReference type="DMDM" id="44887841"/>
<dbReference type="MassIVE" id="Q9NQZ3"/>
<dbReference type="PeptideAtlas" id="Q9NQZ3"/>
<dbReference type="ProteomicsDB" id="61241"/>
<dbReference type="Antibodypedia" id="21891">
    <property type="antibodies" value="183 antibodies from 24 providers"/>
</dbReference>
<dbReference type="DNASU" id="1617"/>
<dbReference type="Ensembl" id="ENST00000405239.6">
    <molecule id="Q9NQZ3-1"/>
    <property type="protein sequence ID" value="ENSP00000384573.1"/>
    <property type="gene ID" value="ENSG00000188120.16"/>
</dbReference>
<dbReference type="GeneID" id="1617"/>
<dbReference type="KEGG" id="hsa:1617"/>
<dbReference type="MANE-Select" id="ENST00000405239.6">
    <property type="protein sequence ID" value="ENSP00000384573.1"/>
    <property type="RefSeq nucleotide sequence ID" value="NM_004081.7"/>
    <property type="RefSeq protein sequence ID" value="NP_004072.3"/>
</dbReference>
<dbReference type="UCSC" id="uc004fvl.4">
    <molecule id="Q9NQZ3-1"/>
    <property type="organism name" value="human"/>
</dbReference>
<dbReference type="AGR" id="HGNC:2682"/>
<dbReference type="CTD" id="1617"/>
<dbReference type="DisGeNET" id="1617"/>
<dbReference type="GeneCards" id="DAZ1"/>
<dbReference type="GeneReviews" id="DAZ1"/>
<dbReference type="HGNC" id="HGNC:2682">
    <property type="gene designation" value="DAZ1"/>
</dbReference>
<dbReference type="HPA" id="ENSG00000188120">
    <property type="expression patterns" value="Tissue enriched (testis)"/>
</dbReference>
<dbReference type="MalaCards" id="DAZ1"/>
<dbReference type="MIM" id="400003">
    <property type="type" value="gene"/>
</dbReference>
<dbReference type="MIM" id="415000">
    <property type="type" value="phenotype"/>
</dbReference>
<dbReference type="neXtProt" id="NX_Q9NQZ3"/>
<dbReference type="OpenTargets" id="ENSG00000188120"/>
<dbReference type="Orphanet" id="1646">
    <property type="disease" value="Chromosome Y microdeletion syndrome"/>
</dbReference>
<dbReference type="PharmGKB" id="PA27149"/>
<dbReference type="VEuPathDB" id="HostDB:ENSG00000188120"/>
<dbReference type="GeneTree" id="ENSGT00530000063480"/>
<dbReference type="HOGENOM" id="CLU_022076_0_0_1"/>
<dbReference type="InParanoid" id="Q9NQZ3"/>
<dbReference type="PAN-GO" id="Q9NQZ3">
    <property type="GO annotations" value="5 GO annotations based on evolutionary models"/>
</dbReference>
<dbReference type="PhylomeDB" id="Q9NQZ3"/>
<dbReference type="TreeFam" id="TF324396"/>
<dbReference type="PathwayCommons" id="Q9NQZ3"/>
<dbReference type="SignaLink" id="Q9NQZ3"/>
<dbReference type="BioGRID-ORCS" id="1617">
    <property type="hits" value="11 hits in 263 CRISPR screens"/>
</dbReference>
<dbReference type="ChiTaRS" id="DAZ1">
    <property type="organism name" value="human"/>
</dbReference>
<dbReference type="GeneWiki" id="DAZ1"/>
<dbReference type="GenomeRNAi" id="1617"/>
<dbReference type="Pharos" id="Q9NQZ3">
    <property type="development level" value="Tbio"/>
</dbReference>
<dbReference type="PRO" id="PR:Q9NQZ3"/>
<dbReference type="Proteomes" id="UP000005640">
    <property type="component" value="Chromosome Y"/>
</dbReference>
<dbReference type="RNAct" id="Q9NQZ3">
    <property type="molecule type" value="protein"/>
</dbReference>
<dbReference type="Bgee" id="ENSG00000188120">
    <property type="expression patterns" value="Expressed in male germ line stem cell (sensu Vertebrata) in testis and 30 other cell types or tissues"/>
</dbReference>
<dbReference type="ExpressionAtlas" id="Q9NQZ3">
    <property type="expression patterns" value="baseline"/>
</dbReference>
<dbReference type="GO" id="GO:0005737">
    <property type="term" value="C:cytoplasm"/>
    <property type="evidence" value="ECO:0000314"/>
    <property type="project" value="UniProtKB"/>
</dbReference>
<dbReference type="GO" id="GO:0005634">
    <property type="term" value="C:nucleus"/>
    <property type="evidence" value="ECO:0000314"/>
    <property type="project" value="UniProtKB"/>
</dbReference>
<dbReference type="GO" id="GO:0032991">
    <property type="term" value="C:protein-containing complex"/>
    <property type="evidence" value="ECO:0000314"/>
    <property type="project" value="UniProtKB"/>
</dbReference>
<dbReference type="GO" id="GO:0003730">
    <property type="term" value="F:mRNA 3'-UTR binding"/>
    <property type="evidence" value="ECO:0000318"/>
    <property type="project" value="GO_Central"/>
</dbReference>
<dbReference type="GO" id="GO:0008494">
    <property type="term" value="F:translation activator activity"/>
    <property type="evidence" value="ECO:0000314"/>
    <property type="project" value="UniProtKB"/>
</dbReference>
<dbReference type="GO" id="GO:0070935">
    <property type="term" value="P:3'-UTR-mediated mRNA stabilization"/>
    <property type="evidence" value="ECO:0000318"/>
    <property type="project" value="GO_Central"/>
</dbReference>
<dbReference type="GO" id="GO:0030154">
    <property type="term" value="P:cell differentiation"/>
    <property type="evidence" value="ECO:0007669"/>
    <property type="project" value="UniProtKB-KW"/>
</dbReference>
<dbReference type="GO" id="GO:0045948">
    <property type="term" value="P:positive regulation of translational initiation"/>
    <property type="evidence" value="ECO:0000314"/>
    <property type="project" value="UniProtKB"/>
</dbReference>
<dbReference type="GO" id="GO:0007283">
    <property type="term" value="P:spermatogenesis"/>
    <property type="evidence" value="ECO:0007669"/>
    <property type="project" value="UniProtKB-KW"/>
</dbReference>
<dbReference type="CDD" id="cd12672">
    <property type="entry name" value="RRM_DAZL"/>
    <property type="match status" value="3"/>
</dbReference>
<dbReference type="FunFam" id="3.30.70.330:FF:000180">
    <property type="entry name" value="Deleted in azoospermia-like"/>
    <property type="match status" value="3"/>
</dbReference>
<dbReference type="Gene3D" id="3.30.70.330">
    <property type="match status" value="3"/>
</dbReference>
<dbReference type="InterPro" id="IPR043628">
    <property type="entry name" value="DAZ_dom"/>
</dbReference>
<dbReference type="InterPro" id="IPR037551">
    <property type="entry name" value="DAZ_RRM_vert"/>
</dbReference>
<dbReference type="InterPro" id="IPR012677">
    <property type="entry name" value="Nucleotide-bd_a/b_plait_sf"/>
</dbReference>
<dbReference type="InterPro" id="IPR035979">
    <property type="entry name" value="RBD_domain_sf"/>
</dbReference>
<dbReference type="InterPro" id="IPR000504">
    <property type="entry name" value="RRM_dom"/>
</dbReference>
<dbReference type="PANTHER" id="PTHR11176">
    <property type="entry name" value="BOULE-RELATED"/>
    <property type="match status" value="1"/>
</dbReference>
<dbReference type="PANTHER" id="PTHR11176:SF8">
    <property type="entry name" value="DELETED IN AZOOSPERMIA PROTEIN 1-RELATED"/>
    <property type="match status" value="1"/>
</dbReference>
<dbReference type="Pfam" id="PF18872">
    <property type="entry name" value="Daz"/>
    <property type="match status" value="9"/>
</dbReference>
<dbReference type="Pfam" id="PF00076">
    <property type="entry name" value="RRM_1"/>
    <property type="match status" value="3"/>
</dbReference>
<dbReference type="SMART" id="SM00360">
    <property type="entry name" value="RRM"/>
    <property type="match status" value="3"/>
</dbReference>
<dbReference type="SUPFAM" id="SSF54928">
    <property type="entry name" value="RNA-binding domain, RBD"/>
    <property type="match status" value="3"/>
</dbReference>
<dbReference type="PROSITE" id="PS51890">
    <property type="entry name" value="DAZ"/>
    <property type="match status" value="9"/>
</dbReference>
<dbReference type="PROSITE" id="PS50102">
    <property type="entry name" value="RRM"/>
    <property type="match status" value="3"/>
</dbReference>
<name>DAZ1_HUMAN</name>
<evidence type="ECO:0000255" key="1">
    <source>
        <dbReference type="PROSITE-ProRule" id="PRU00176"/>
    </source>
</evidence>
<evidence type="ECO:0000255" key="2">
    <source>
        <dbReference type="PROSITE-ProRule" id="PRU01238"/>
    </source>
</evidence>
<evidence type="ECO:0000256" key="3">
    <source>
        <dbReference type="SAM" id="MobiDB-lite"/>
    </source>
</evidence>
<evidence type="ECO:0000269" key="4">
    <source>
    </source>
</evidence>
<evidence type="ECO:0000269" key="5">
    <source>
    </source>
</evidence>
<evidence type="ECO:0000269" key="6">
    <source>
    </source>
</evidence>
<evidence type="ECO:0000269" key="7">
    <source>
    </source>
</evidence>
<evidence type="ECO:0000269" key="8">
    <source>
    </source>
</evidence>
<evidence type="ECO:0000269" key="9">
    <source>
    </source>
</evidence>
<evidence type="ECO:0000269" key="10">
    <source>
    </source>
</evidence>
<evidence type="ECO:0000269" key="11">
    <source>
    </source>
</evidence>
<evidence type="ECO:0000269" key="12">
    <source>
    </source>
</evidence>
<evidence type="ECO:0000269" key="13">
    <source>
    </source>
</evidence>
<evidence type="ECO:0000269" key="14">
    <source>
    </source>
</evidence>
<evidence type="ECO:0000269" key="15">
    <source>
    </source>
</evidence>
<evidence type="ECO:0000269" key="16">
    <source>
    </source>
</evidence>
<evidence type="ECO:0000303" key="17">
    <source>
    </source>
</evidence>
<evidence type="ECO:0000305" key="18"/>
<evidence type="ECO:0000305" key="19">
    <source>
    </source>
</evidence>
<reference key="1">
    <citation type="journal article" date="2003" name="Nature">
        <title>The male-specific region of the human Y chromosome is a mosaic of discrete sequence classes.</title>
        <authorList>
            <person name="Skaletsky H."/>
            <person name="Kuroda-Kawaguchi T."/>
            <person name="Minx P.J."/>
            <person name="Cordum H.S."/>
            <person name="Hillier L.W."/>
            <person name="Brown L.G."/>
            <person name="Repping S."/>
            <person name="Pyntikova T."/>
            <person name="Ali J."/>
            <person name="Bieri T."/>
            <person name="Chinwalla A."/>
            <person name="Delehaunty A."/>
            <person name="Delehaunty K."/>
            <person name="Du H."/>
            <person name="Fewell G."/>
            <person name="Fulton L."/>
            <person name="Fulton R."/>
            <person name="Graves T.A."/>
            <person name="Hou S.-F."/>
            <person name="Latrielle P."/>
            <person name="Leonard S."/>
            <person name="Mardis E."/>
            <person name="Maupin R."/>
            <person name="McPherson J."/>
            <person name="Miner T."/>
            <person name="Nash W."/>
            <person name="Nguyen C."/>
            <person name="Ozersky P."/>
            <person name="Pepin K."/>
            <person name="Rock S."/>
            <person name="Rohlfing T."/>
            <person name="Scott K."/>
            <person name="Schultz B."/>
            <person name="Strong C."/>
            <person name="Tin-Wollam A."/>
            <person name="Yang S.-P."/>
            <person name="Waterston R.H."/>
            <person name="Wilson R.K."/>
            <person name="Rozen S."/>
            <person name="Page D.C."/>
        </authorList>
    </citation>
    <scope>NUCLEOTIDE SEQUENCE [LARGE SCALE GENOMIC DNA]</scope>
</reference>
<reference key="2">
    <citation type="journal article" date="2004" name="Genome Res.">
        <title>The status, quality, and expansion of the NIH full-length cDNA project: the Mammalian Gene Collection (MGC).</title>
        <authorList>
            <consortium name="The MGC Project Team"/>
        </authorList>
    </citation>
    <scope>NUCLEOTIDE SEQUENCE [LARGE SCALE MRNA] (ISOFORM 2)</scope>
</reference>
<reference key="3">
    <citation type="journal article" date="2000" name="Genomics">
        <title>Four DAZ genes in two clusters found in the AZFc region of the human Y chromosome.</title>
        <authorList>
            <person name="Saxena R."/>
            <person name="de Vries J.W.A."/>
            <person name="Repping S."/>
            <person name="Alagappan R.K."/>
            <person name="Skaletsky H."/>
            <person name="Brown L.G."/>
            <person name="Ma P."/>
            <person name="Chen E."/>
            <person name="Hoovers J.M.N."/>
            <person name="Page D.C."/>
        </authorList>
    </citation>
    <scope>NUCLEOTIDE SEQUENCE [MRNA] OF 244-744 (ISOFORM 1)</scope>
    <scope>GENE STRUCTURE</scope>
    <scope>GENE NOMENCLATURE</scope>
    <scope>TISSUE SPECIFICITY</scope>
</reference>
<reference key="4">
    <citation type="journal article" date="2000" name="Genomics">
        <title>Identification of two novel proteins that interact with germ-cell-specific RNA-binding proteins DAZ and DAZL1.</title>
        <authorList>
            <person name="Tsui S."/>
            <person name="Dai T."/>
            <person name="Roettger S."/>
            <person name="Schempp W."/>
            <person name="Salido E.C."/>
            <person name="Yen P.H."/>
        </authorList>
    </citation>
    <scope>INTERACTION WITH DAZAP1 AND DAZAP2</scope>
</reference>
<reference key="5">
    <citation type="journal article" date="2000" name="Biol. Reprod.">
        <title>DAZ family proteins exist throughout male germ cell development and transit from nucleus to cytoplasm at meiosis in humans and mice.</title>
        <authorList>
            <person name="Reijo R.A."/>
            <person name="Dorfman D.M."/>
            <person name="Slee R."/>
            <person name="Renshaw A.A."/>
            <person name="Loughlin K.R."/>
            <person name="Cooke H."/>
            <person name="Page D.C."/>
        </authorList>
    </citation>
    <scope>SUBCELLULAR LOCATION</scope>
</reference>
<reference key="6">
    <citation type="journal article" date="2000" name="Gene">
        <title>In vivo and in vitro analysis of homodimerisation activity of the mouse Dazl1 protein.</title>
        <authorList>
            <person name="Ruggiu M."/>
            <person name="Cooke H.J."/>
        </authorList>
    </citation>
    <scope>INTERACTION WITH DAZL</scope>
</reference>
<reference key="7">
    <citation type="journal article" date="2001" name="Proc. Natl. Acad. Sci. U.S.A.">
        <title>A gene family required for human germ cell development evolved from an ancient meiotic gene conserved in metazoans.</title>
        <authorList>
            <person name="Xu E.Y."/>
            <person name="Moore F.L."/>
            <person name="Reijo Pera R.A."/>
        </authorList>
    </citation>
    <scope>INTERACTION WITH BOLL</scope>
</reference>
<reference key="8">
    <citation type="journal article" date="2003" name="Proc. Natl. Acad. Sci. U.S.A.">
        <title>Human Pumilio-2 is expressed in embryonic stem cells and germ cells and interacts with DAZ (Deleted in AZoospermia) and DAZ-like proteins.</title>
        <authorList>
            <person name="Moore F.L."/>
            <person name="Jaruzelska J."/>
            <person name="Fox M.S."/>
            <person name="Urano J."/>
            <person name="Firpo M.T."/>
            <person name="Turek P.J."/>
            <person name="Dorfman D.M."/>
            <person name="Reijo Pera R.A."/>
        </authorList>
    </citation>
    <scope>INTERACTION WITH PUM2; DZIP1 AND DZIP3</scope>
</reference>
<reference key="9">
    <citation type="journal article" date="2003" name="APMIS">
        <title>Polymorphic DAZ gene family in polymorphic structure of AZFc locus: artwork or functional for human spermatogenesis?</title>
        <authorList>
            <person name="Vogt P.H."/>
            <person name="Fernandes S."/>
        </authorList>
    </citation>
    <scope>REVIEW</scope>
</reference>
<reference key="10">
    <citation type="journal article" date="2000" name="J. Clin. Endocrinol. Metab.">
        <title>Male infertility caused by a de novo partial deletion of the DAZ cluster on the Y chromosome.</title>
        <authorList>
            <person name="Moro E."/>
            <person name="Ferlin A."/>
            <person name="Yen P.H."/>
            <person name="Franchi P.G."/>
            <person name="Palka G."/>
            <person name="Foresta C."/>
        </authorList>
    </citation>
    <scope>INVOLVEMENT IN SPGFY2</scope>
</reference>
<reference key="11">
    <citation type="journal article" date="2002" name="Mol. Hum. Reprod.">
        <title>High frequency of DAZ1/DAZ2 gene deletions in patients with severe oligozoospermia.</title>
        <authorList>
            <person name="Fernandes S."/>
            <person name="Huellen K."/>
            <person name="Goncalves J."/>
            <person name="Dukal H."/>
            <person name="Zeisler J."/>
            <person name="Rajpert De Meyts E."/>
            <person name="Skakkebaek N.E."/>
            <person name="Habermann B."/>
            <person name="Krause W."/>
            <person name="Sousa M."/>
            <person name="Barros A."/>
            <person name="Vogt P.H."/>
        </authorList>
    </citation>
    <scope>INVOLVEMENT IN SPGFY2</scope>
</reference>
<reference key="12">
    <citation type="journal article" date="2003" name="Fertil. Steril.">
        <title>Partial DAZ deletions in a family with five infertile brothers.</title>
        <authorList>
            <person name="Gianotten J."/>
            <person name="Hoffer M.J.V."/>
            <person name="De Vries J.W.A."/>
            <person name="Leschot N.J."/>
            <person name="Gerris J."/>
            <person name="van der Veen F."/>
        </authorList>
    </citation>
    <scope>INVOLVEMENT IN SPGFY2</scope>
</reference>
<reference key="13">
    <citation type="journal article" date="2005" name="Fertil. Steril.">
        <title>Copy number of DAZ genes in infertile men.</title>
        <authorList>
            <person name="Writzl K."/>
            <person name="Zorn B."/>
            <person name="Peterlin B."/>
        </authorList>
    </citation>
    <scope>GENE DUPLICATION</scope>
</reference>
<reference key="14">
    <citation type="journal article" date="2008" name="Hum. Reprod.">
        <title>Restricted expression of the human DAZ protein in premeiotic germ cells.</title>
        <authorList>
            <person name="Huang W.J."/>
            <person name="Lin Y.W."/>
            <person name="Hsiao K.N."/>
            <person name="Eilber K.S."/>
            <person name="Salido E.C."/>
            <person name="Yen P.H."/>
        </authorList>
    </citation>
    <scope>TISSUE SPECIFICITY</scope>
</reference>
<reference key="15">
    <citation type="journal article" date="2009" name="Hum. Reprod.">
        <title>Polymorphic expression of DAZ proteins in the human testis.</title>
        <authorList>
            <person name="Kim B."/>
            <person name="Lee Y."/>
            <person name="Kim Y."/>
            <person name="Lee K.H."/>
            <person name="Chun S."/>
            <person name="Rhee K."/>
            <person name="Seo J.T."/>
            <person name="Kim S.W."/>
            <person name="Paick J.S."/>
        </authorList>
    </citation>
    <scope>TISSUE SPECIFICITY</scope>
</reference>
<reference key="16">
    <citation type="journal article" date="2009" name="Nature">
        <title>Human DAZL, DAZ and BOULE genes modulate primordial germ-cell and haploid gamete formation.</title>
        <authorList>
            <person name="Kee K."/>
            <person name="Angeles V.T."/>
            <person name="Flores M."/>
            <person name="Nguyen H.N."/>
            <person name="Reijo Pera R.A."/>
        </authorList>
    </citation>
    <scope>FUNCTION</scope>
</reference>
<reference key="17">
    <citation type="journal article" date="2019" name="J. Proteome Res.">
        <title>Cell Type-Specific Expression of Testis Elevated Genes Based on Transcriptomics and Antibody-Based Proteomics.</title>
        <authorList>
            <person name="Pineau C."/>
            <person name="Hikmet F."/>
            <person name="Zhang C."/>
            <person name="Oksvold P."/>
            <person name="Chen S."/>
            <person name="Fagerberg L."/>
            <person name="Uhlen M."/>
            <person name="Lindskog C."/>
        </authorList>
    </citation>
    <scope>SUBCELLULAR LOCATION</scope>
</reference>
<feature type="chain" id="PRO_0000081554" description="Deleted in azoospermia protein 1">
    <location>
        <begin position="1"/>
        <end position="744"/>
    </location>
</feature>
<feature type="domain" description="RRM 1" evidence="1">
    <location>
        <begin position="40"/>
        <end position="115"/>
    </location>
</feature>
<feature type="domain" description="RRM 2" evidence="1">
    <location>
        <begin position="205"/>
        <end position="280"/>
    </location>
</feature>
<feature type="domain" description="RRM 3" evidence="1">
    <location>
        <begin position="370"/>
        <end position="445"/>
    </location>
</feature>
<feature type="domain" description="DAZ 1" evidence="2">
    <location>
        <begin position="497"/>
        <end position="520"/>
    </location>
</feature>
<feature type="domain" description="DAZ 2" evidence="2">
    <location>
        <begin position="521"/>
        <end position="544"/>
    </location>
</feature>
<feature type="domain" description="DAZ 3" evidence="2">
    <location>
        <begin position="545"/>
        <end position="568"/>
    </location>
</feature>
<feature type="domain" description="DAZ 4" evidence="2">
    <location>
        <begin position="569"/>
        <end position="592"/>
    </location>
</feature>
<feature type="domain" description="DAZ 5" evidence="2">
    <location>
        <begin position="593"/>
        <end position="616"/>
    </location>
</feature>
<feature type="domain" description="DAZ 6" evidence="2">
    <location>
        <begin position="617"/>
        <end position="640"/>
    </location>
</feature>
<feature type="domain" description="DAZ 7" evidence="2">
    <location>
        <begin position="641"/>
        <end position="664"/>
    </location>
</feature>
<feature type="domain" description="DAZ 8" evidence="2">
    <location>
        <begin position="665"/>
        <end position="688"/>
    </location>
</feature>
<feature type="domain" description="DAZ 9" evidence="2">
    <location>
        <begin position="689"/>
        <end position="712"/>
    </location>
</feature>
<feature type="region of interest" description="Disordered" evidence="3">
    <location>
        <begin position="1"/>
        <end position="27"/>
    </location>
</feature>
<feature type="region of interest" description="Disordered" evidence="3">
    <location>
        <begin position="163"/>
        <end position="192"/>
    </location>
</feature>
<feature type="region of interest" description="Disordered" evidence="3">
    <location>
        <begin position="328"/>
        <end position="357"/>
    </location>
</feature>
<feature type="compositionally biased region" description="Polar residues" evidence="3">
    <location>
        <begin position="1"/>
        <end position="10"/>
    </location>
</feature>
<feature type="compositionally biased region" description="Low complexity" evidence="3">
    <location>
        <begin position="11"/>
        <end position="27"/>
    </location>
</feature>
<feature type="compositionally biased region" description="Polar residues" evidence="3">
    <location>
        <begin position="163"/>
        <end position="175"/>
    </location>
</feature>
<feature type="compositionally biased region" description="Low complexity" evidence="3">
    <location>
        <begin position="176"/>
        <end position="192"/>
    </location>
</feature>
<feature type="compositionally biased region" description="Polar residues" evidence="3">
    <location>
        <begin position="328"/>
        <end position="340"/>
    </location>
</feature>
<feature type="compositionally biased region" description="Low complexity" evidence="3">
    <location>
        <begin position="341"/>
        <end position="357"/>
    </location>
</feature>
<feature type="splice variant" id="VSP_056239" description="In isoform 2." evidence="17">
    <original>YNYQPFPAYPSSPFQVTAGYQLPVY</original>
    <variation>CEICKILVLKNAAAFLCHSKVNRSI</variation>
    <location>
        <begin position="589"/>
        <end position="613"/>
    </location>
</feature>
<feature type="splice variant" id="VSP_056240" description="In isoform 2." evidence="17">
    <location>
        <begin position="614"/>
        <end position="744"/>
    </location>
</feature>
<feature type="sequence conflict" description="In Ref. 3; AAF91405." evidence="18" ref="3">
    <original>R</original>
    <variation>G</variation>
    <location>
        <position position="287"/>
    </location>
</feature>
<organism>
    <name type="scientific">Homo sapiens</name>
    <name type="common">Human</name>
    <dbReference type="NCBI Taxonomy" id="9606"/>
    <lineage>
        <taxon>Eukaryota</taxon>
        <taxon>Metazoa</taxon>
        <taxon>Chordata</taxon>
        <taxon>Craniata</taxon>
        <taxon>Vertebrata</taxon>
        <taxon>Euteleostomi</taxon>
        <taxon>Mammalia</taxon>
        <taxon>Eutheria</taxon>
        <taxon>Euarchontoglires</taxon>
        <taxon>Primates</taxon>
        <taxon>Haplorrhini</taxon>
        <taxon>Catarrhini</taxon>
        <taxon>Hominidae</taxon>
        <taxon>Homo</taxon>
    </lineage>
</organism>
<sequence length="744" mass="82764">MSAANPETPNSTISREASTQSSSAAASQGWVLPEGKIVPNTVFVGGIDARMDETEIGSCFGRYGSVKEVKIITNRTGVSKGYGFVSFVNDVDVQKIVGSQIHFHGKKLKLGPAIRKQKLCARHVQPRPLVVNPPPPPQFQNVWRNPNTETYLQPQITPNPVTQHVQSAANPETPNSTISREASTQSSSAAASQGWVLPEGKIVPNTVFVGGIDARMDETEIGSCFGRYGSVKEVKIITNRTGVSKGYGFVSFVNDVDVQKIVGSQIHFHGKKLKLGPAIRKQKLCARHVQPRPLVVNPPPPPQFQNVWRNPNTETYLQPQITPNPVTQHVQSAANPETPNSTISREASTQSSSAAASQGWVLPEGKIVPNTVFVGGIDARMDETEIGSCFGRYGSVKEVKIITNRTGVSKGYGFVSFVNDVDVQKIVGSQIHFHGKKLKLGPAIRKQKLCARHVQPRPLVVNPPPPPQFQNVWRNPNTETYLQPQITPNPVTQHVQAYSAYPHSPGQVITGCQLLVYNYQEYPTYPDSAFQVTTGYQLPVYNYQPFPAYPRSPFQVTAGYQLPVYNYQAFPAYPNSPFQVATGYQFPVYNYQPFPAYPSSPFQVTAGYQLPVYNYQAFPAYPNSPFQVATGYQFPVYNYQAFPAYPNSPVQVTTGYQLPVYNYQAFPAYPSSPFQVTTGYQLPVYNYQAFPAYPNSAVQVTTGYQFHVYNYQMPPQCPVGEQRRNLWTEAYKWWYLVCLIQRRD</sequence>
<proteinExistence type="evidence at protein level"/>
<comment type="function">
    <text evidence="15">RNA-binding protein that plays an essential role in spermatogenesis. May act by binding to the 3'-UTR of mRNAs and regulating their translation. Promotes germ-cell progression to meiosis and formation of haploid germ cells.</text>
</comment>
<comment type="subunit">
    <text evidence="4 5 9 11">Forms a heterodimer with BOLL and DAZL. Interacts with PUM2, DAZAP1, DAZAP2, DZIP1 and DZIP3.</text>
</comment>
<comment type="interaction">
    <interactant intactId="EBI-997955">
        <id>Q9NQZ3</id>
    </interactant>
    <interactant intactId="EBI-2133162">
        <id>Q96EP5</id>
        <label>DAZAP1</label>
    </interactant>
    <organismsDiffer>false</organismsDiffer>
    <experiments>3</experiments>
</comment>
<comment type="interaction">
    <interactant intactId="EBI-997955">
        <id>Q9NQZ3</id>
    </interactant>
    <interactant intactId="EBI-724310">
        <id>Q15038</id>
        <label>DAZAP2</label>
    </interactant>
    <organismsDiffer>false</organismsDiffer>
    <experiments>3</experiments>
</comment>
<comment type="interaction">
    <interactant intactId="EBI-997955">
        <id>Q9NQZ3</id>
    </interactant>
    <interactant intactId="EBI-998153">
        <id>Q92904</id>
        <label>DAZL</label>
    </interactant>
    <organismsDiffer>false</organismsDiffer>
    <experiments>2</experiments>
</comment>
<comment type="interaction">
    <interactant intactId="EBI-997955">
        <id>Q9NQZ3</id>
    </interactant>
    <interactant intactId="EBI-311190">
        <id>Q8TB72</id>
        <label>PUM2</label>
    </interactant>
    <organismsDiffer>false</organismsDiffer>
    <experiments>5</experiments>
</comment>
<comment type="subcellular location">
    <subcellularLocation>
        <location evidence="7 16">Cytoplasm</location>
    </subcellularLocation>
    <subcellularLocation>
        <location evidence="7">Nucleus</location>
    </subcellularLocation>
    <text>Predominantly cytoplasmic. Nuclear at some stages of spermatozoide development. Localizes both to the nuclei and cytoplasm of spermatozoide differentiation. Nuclear in fetal gonocytes and in spermatogonial nuclei. It then relocates to the cytoplasm during male meiosis.</text>
</comment>
<comment type="alternative products">
    <event type="alternative splicing"/>
    <isoform>
        <id>Q9NQZ3-1</id>
        <name>1</name>
        <sequence type="displayed"/>
    </isoform>
    <isoform>
        <id>Q9NQZ3-2</id>
        <name>2</name>
        <sequence type="described" ref="VSP_056239 VSP_056240"/>
    </isoform>
</comment>
<comment type="tissue specificity">
    <text evidence="6 13 14">Testis-specific. Expression restricted to premeiotic germ cells, particularly in spermatogonia (at protein level).</text>
</comment>
<comment type="domain">
    <text>The DAZ domains are essential and mediate the interaction with DAZAP1 and DAZAP2.</text>
</comment>
<comment type="polymorphism">
    <text evidence="19">The number as well as the precise structure of the DAZ proteins probably differs within the population.</text>
</comment>
<comment type="disease" evidence="8 10 12">
    <disease id="DI-02062">
        <name>Spermatogenic failure Y-linked 2</name>
        <acronym>SPGFY2</acronym>
        <description>A disorder resulting in the absence (azoospermia) or reduction (oligozoospermia) of sperm in the semen, leading to male infertility.</description>
        <dbReference type="MIM" id="415000"/>
    </disease>
    <text>The disease may be caused by variants affecting the gene represented in this entry. AZFc deletions in the Yq11.23 region including the DAZ genes are the most common known genetic cause of human male infertility.</text>
</comment>
<comment type="miscellaneous">
    <text>DAZ genes are prone to deletions but also to duplications. In a population of infertile men, DAZ genes deletions are associated with oligozoospermia but an increased number of DAZ genes is not a significant risk factor for spermatogenic failure.</text>
</comment>
<comment type="miscellaneous">
    <text>The DAZ proteins (DAZ, DAZ2, DAZ4 and DAZ4) are all encoded by a strongly repeated region of the Y chromosome, in two clusters each comprising an inverted pair of DAZ genes. They are very similar, which gives their indidual characterization difficult. Thus, most experiments do not discriminate between the different members. One can therefore suppose that reported interactions with a DAZ protein involve all the 4 proteins.</text>
</comment>
<comment type="similarity">
    <text evidence="2">Belongs to the RRM DAZ family.</text>
</comment>